<feature type="signal peptide">
    <location>
        <begin position="1"/>
        <end position="23"/>
    </location>
</feature>
<feature type="chain" id="PRO_0000016407" description="Interferon omega-2">
    <location>
        <begin position="24"/>
        <end position="195"/>
    </location>
</feature>
<feature type="glycosylation site" description="N-linked (GlcNAc...) asparagine" evidence="2">
    <location>
        <position position="101"/>
    </location>
</feature>
<feature type="disulfide bond" evidence="1">
    <location>
        <begin position="24"/>
        <end position="122"/>
    </location>
</feature>
<feature type="disulfide bond" evidence="1">
    <location>
        <begin position="52"/>
        <end position="162"/>
    </location>
</feature>
<protein>
    <recommendedName>
        <fullName>Interferon omega-2</fullName>
    </recommendedName>
    <alternativeName>
        <fullName>Interferon alpha-II-2</fullName>
    </alternativeName>
</protein>
<accession>P05002</accession>
<keyword id="KW-0051">Antiviral defense</keyword>
<keyword id="KW-0202">Cytokine</keyword>
<keyword id="KW-1015">Disulfide bond</keyword>
<keyword id="KW-0325">Glycoprotein</keyword>
<keyword id="KW-1185">Reference proteome</keyword>
<keyword id="KW-0964">Secreted</keyword>
<keyword id="KW-0732">Signal</keyword>
<comment type="subcellular location">
    <subcellularLocation>
        <location>Secreted</location>
    </subcellularLocation>
</comment>
<comment type="similarity">
    <text evidence="3">Belongs to the alpha/beta interferon family.</text>
</comment>
<evidence type="ECO:0000250" key="1"/>
<evidence type="ECO:0000255" key="2"/>
<evidence type="ECO:0000305" key="3"/>
<reference key="1">
    <citation type="journal article" date="1986" name="DNA">
        <title>Molecular cloning and expression in Escherichia coli of equine type I interferons.</title>
        <authorList>
            <person name="Himmler A."/>
            <person name="Hauptmann R."/>
            <person name="Adolf G.R."/>
            <person name="Swetly P."/>
        </authorList>
    </citation>
    <scope>NUCLEOTIDE SEQUENCE [GENOMIC DNA]</scope>
</reference>
<dbReference type="EMBL" id="M14545">
    <property type="protein sequence ID" value="AAA30949.1"/>
    <property type="molecule type" value="Genomic_DNA"/>
</dbReference>
<dbReference type="PIR" id="F24912">
    <property type="entry name" value="IVHO22"/>
</dbReference>
<dbReference type="SMR" id="P05002"/>
<dbReference type="FunCoup" id="P05002">
    <property type="interactions" value="187"/>
</dbReference>
<dbReference type="STRING" id="9796.ENSECAP00000041727"/>
<dbReference type="PaxDb" id="9796-ENSECAP00000041727"/>
<dbReference type="InParanoid" id="P05002"/>
<dbReference type="Proteomes" id="UP000002281">
    <property type="component" value="Unplaced"/>
</dbReference>
<dbReference type="GO" id="GO:0005615">
    <property type="term" value="C:extracellular space"/>
    <property type="evidence" value="ECO:0000318"/>
    <property type="project" value="GO_Central"/>
</dbReference>
<dbReference type="GO" id="GO:0005125">
    <property type="term" value="F:cytokine activity"/>
    <property type="evidence" value="ECO:0000318"/>
    <property type="project" value="GO_Central"/>
</dbReference>
<dbReference type="GO" id="GO:0005132">
    <property type="term" value="F:type I interferon receptor binding"/>
    <property type="evidence" value="ECO:0000318"/>
    <property type="project" value="GO_Central"/>
</dbReference>
<dbReference type="GO" id="GO:0002250">
    <property type="term" value="P:adaptive immune response"/>
    <property type="evidence" value="ECO:0000318"/>
    <property type="project" value="GO_Central"/>
</dbReference>
<dbReference type="GO" id="GO:0002312">
    <property type="term" value="P:B cell activation involved in immune response"/>
    <property type="evidence" value="ECO:0000318"/>
    <property type="project" value="GO_Central"/>
</dbReference>
<dbReference type="GO" id="GO:0051607">
    <property type="term" value="P:defense response to virus"/>
    <property type="evidence" value="ECO:0007669"/>
    <property type="project" value="UniProtKB-KW"/>
</dbReference>
<dbReference type="GO" id="GO:0006959">
    <property type="term" value="P:humoral immune response"/>
    <property type="evidence" value="ECO:0000318"/>
    <property type="project" value="GO_Central"/>
</dbReference>
<dbReference type="GO" id="GO:0002323">
    <property type="term" value="P:natural killer cell activation involved in immune response"/>
    <property type="evidence" value="ECO:0000318"/>
    <property type="project" value="GO_Central"/>
</dbReference>
<dbReference type="GO" id="GO:0043330">
    <property type="term" value="P:response to exogenous dsRNA"/>
    <property type="evidence" value="ECO:0000318"/>
    <property type="project" value="GO_Central"/>
</dbReference>
<dbReference type="GO" id="GO:0002286">
    <property type="term" value="P:T cell activation involved in immune response"/>
    <property type="evidence" value="ECO:0000318"/>
    <property type="project" value="GO_Central"/>
</dbReference>
<dbReference type="GO" id="GO:0060337">
    <property type="term" value="P:type I interferon-mediated signaling pathway"/>
    <property type="evidence" value="ECO:0000318"/>
    <property type="project" value="GO_Central"/>
</dbReference>
<dbReference type="CDD" id="cd00095">
    <property type="entry name" value="IFab"/>
    <property type="match status" value="1"/>
</dbReference>
<dbReference type="FunFam" id="1.20.1250.10:FF:000001">
    <property type="entry name" value="Interferon alpha"/>
    <property type="match status" value="1"/>
</dbReference>
<dbReference type="Gene3D" id="1.20.1250.10">
    <property type="match status" value="1"/>
</dbReference>
<dbReference type="InterPro" id="IPR009079">
    <property type="entry name" value="4_helix_cytokine-like_core"/>
</dbReference>
<dbReference type="InterPro" id="IPR000471">
    <property type="entry name" value="Interferon_alpha/beta/delta"/>
</dbReference>
<dbReference type="PANTHER" id="PTHR11691:SF37">
    <property type="entry name" value="INTERFERON OMEGA-1"/>
    <property type="match status" value="1"/>
</dbReference>
<dbReference type="PANTHER" id="PTHR11691">
    <property type="entry name" value="TYPE I INTERFERON"/>
    <property type="match status" value="1"/>
</dbReference>
<dbReference type="Pfam" id="PF00143">
    <property type="entry name" value="Interferon"/>
    <property type="match status" value="1"/>
</dbReference>
<dbReference type="PRINTS" id="PR00266">
    <property type="entry name" value="INTERFERONAB"/>
</dbReference>
<dbReference type="SMART" id="SM00076">
    <property type="entry name" value="IFabd"/>
    <property type="match status" value="1"/>
</dbReference>
<dbReference type="SUPFAM" id="SSF47266">
    <property type="entry name" value="4-helical cytokines"/>
    <property type="match status" value="1"/>
</dbReference>
<dbReference type="PROSITE" id="PS00252">
    <property type="entry name" value="INTERFERON_A_B_D"/>
    <property type="match status" value="1"/>
</dbReference>
<proteinExistence type="inferred from homology"/>
<organism>
    <name type="scientific">Equus caballus</name>
    <name type="common">Horse</name>
    <dbReference type="NCBI Taxonomy" id="9796"/>
    <lineage>
        <taxon>Eukaryota</taxon>
        <taxon>Metazoa</taxon>
        <taxon>Chordata</taxon>
        <taxon>Craniata</taxon>
        <taxon>Vertebrata</taxon>
        <taxon>Euteleostomi</taxon>
        <taxon>Mammalia</taxon>
        <taxon>Eutheria</taxon>
        <taxon>Laurasiatheria</taxon>
        <taxon>Perissodactyla</taxon>
        <taxon>Equidae</taxon>
        <taxon>Equus</taxon>
    </lineage>
</organism>
<sequence>MALLPSLLTALVVYELWPCGALGCDLPQNHILVSRKNFVLLGQMSRISSAICLKDRKDFRFPQDMADGRQFPEAQAASVLHEMLQQIFSLFHTERSSAAWNTTLLDELCTGLLRQLEDLDTCLEQEMGEEESALGTVRPTLAVKRYFRGIHLYLKEKKYSDCAWEIVRMEIMRSFSSSANLQGRLRMKDGDLGSP</sequence>
<name>IFNW2_HORSE</name>